<keyword id="KW-0002">3D-structure</keyword>
<keyword id="KW-0044">Antibiotic</keyword>
<keyword id="KW-0929">Antimicrobial</keyword>
<keyword id="KW-1015">Disulfide bond</keyword>
<keyword id="KW-0873">Pyrrolidone carboxylic acid</keyword>
<keyword id="KW-1185">Reference proteome</keyword>
<keyword id="KW-0677">Repeat</keyword>
<keyword id="KW-0964">Secreted</keyword>
<keyword id="KW-0732">Signal</keyword>
<feature type="signal peptide" evidence="3">
    <location>
        <begin position="1"/>
        <end position="29"/>
    </location>
</feature>
<feature type="propeptide" id="PRO_0000004712" evidence="1">
    <location>
        <begin position="30"/>
        <end position="130"/>
    </location>
</feature>
<feature type="peptide" id="PRO_0000004713" description="Cathelicidin-3">
    <location>
        <begin position="131"/>
        <end position="190"/>
    </location>
</feature>
<feature type="region of interest" description="Disordered" evidence="4">
    <location>
        <begin position="133"/>
        <end position="190"/>
    </location>
</feature>
<feature type="compositionally biased region" description="Basic residues" evidence="4">
    <location>
        <begin position="133"/>
        <end position="151"/>
    </location>
</feature>
<feature type="compositionally biased region" description="Pro residues" evidence="4">
    <location>
        <begin position="172"/>
        <end position="190"/>
    </location>
</feature>
<feature type="modified residue" description="Pyrrolidone carboxylic acid" evidence="2">
    <location>
        <position position="30"/>
    </location>
</feature>
<feature type="disulfide bond" evidence="1">
    <location>
        <begin position="85"/>
        <end position="96"/>
    </location>
</feature>
<feature type="disulfide bond" evidence="1">
    <location>
        <begin position="107"/>
        <end position="124"/>
    </location>
</feature>
<feature type="strand" evidence="6">
    <location>
        <begin position="168"/>
        <end position="170"/>
    </location>
</feature>
<name>CTHL3_SHEEP</name>
<dbReference type="EMBL" id="L46852">
    <property type="protein sequence ID" value="AAA85468.1"/>
    <property type="molecule type" value="mRNA"/>
</dbReference>
<dbReference type="PIR" id="S68230">
    <property type="entry name" value="S68230"/>
</dbReference>
<dbReference type="RefSeq" id="NP_001009301.1">
    <property type="nucleotide sequence ID" value="NM_001009301.1"/>
</dbReference>
<dbReference type="PDB" id="4JWE">
    <property type="method" value="X-ray"/>
    <property type="resolution" value="1.95 A"/>
    <property type="chains" value="C/D=131-151"/>
</dbReference>
<dbReference type="PDB" id="4JWI">
    <property type="method" value="X-ray"/>
    <property type="resolution" value="1.90 A"/>
    <property type="chains" value="C/D=165-173"/>
</dbReference>
<dbReference type="PDBsum" id="4JWE"/>
<dbReference type="PDBsum" id="4JWI"/>
<dbReference type="SMR" id="P50415"/>
<dbReference type="STRING" id="9940.ENSOARP00000001893"/>
<dbReference type="PaxDb" id="9940-ENSOARP00000001893"/>
<dbReference type="GeneID" id="443311"/>
<dbReference type="KEGG" id="oas:443311"/>
<dbReference type="CTD" id="281037"/>
<dbReference type="eggNOG" id="ENOG502SAES">
    <property type="taxonomic scope" value="Eukaryota"/>
</dbReference>
<dbReference type="OrthoDB" id="9930485at2759"/>
<dbReference type="EvolutionaryTrace" id="P50415"/>
<dbReference type="Proteomes" id="UP000002356">
    <property type="component" value="Unplaced"/>
</dbReference>
<dbReference type="GO" id="GO:0005615">
    <property type="term" value="C:extracellular space"/>
    <property type="evidence" value="ECO:0007669"/>
    <property type="project" value="TreeGrafter"/>
</dbReference>
<dbReference type="GO" id="GO:0001530">
    <property type="term" value="F:lipopolysaccharide binding"/>
    <property type="evidence" value="ECO:0007669"/>
    <property type="project" value="TreeGrafter"/>
</dbReference>
<dbReference type="GO" id="GO:0061844">
    <property type="term" value="P:antimicrobial humoral immune response mediated by antimicrobial peptide"/>
    <property type="evidence" value="ECO:0007669"/>
    <property type="project" value="TreeGrafter"/>
</dbReference>
<dbReference type="GO" id="GO:0050829">
    <property type="term" value="P:defense response to Gram-negative bacterium"/>
    <property type="evidence" value="ECO:0007669"/>
    <property type="project" value="TreeGrafter"/>
</dbReference>
<dbReference type="GO" id="GO:0050830">
    <property type="term" value="P:defense response to Gram-positive bacterium"/>
    <property type="evidence" value="ECO:0007669"/>
    <property type="project" value="TreeGrafter"/>
</dbReference>
<dbReference type="GO" id="GO:0045087">
    <property type="term" value="P:innate immune response"/>
    <property type="evidence" value="ECO:0007669"/>
    <property type="project" value="TreeGrafter"/>
</dbReference>
<dbReference type="FunFam" id="3.10.450.10:FF:000003">
    <property type="entry name" value="Cathelicidin antimicrobial peptide"/>
    <property type="match status" value="1"/>
</dbReference>
<dbReference type="Gene3D" id="3.10.450.10">
    <property type="match status" value="1"/>
</dbReference>
<dbReference type="InterPro" id="IPR001894">
    <property type="entry name" value="Cathelicidin-like"/>
</dbReference>
<dbReference type="InterPro" id="IPR018216">
    <property type="entry name" value="Cathelicidin_CS"/>
</dbReference>
<dbReference type="InterPro" id="IPR046350">
    <property type="entry name" value="Cystatin_sf"/>
</dbReference>
<dbReference type="PANTHER" id="PTHR10206">
    <property type="entry name" value="CATHELICIDIN"/>
    <property type="match status" value="1"/>
</dbReference>
<dbReference type="PANTHER" id="PTHR10206:SF2">
    <property type="entry name" value="CATHELICIDIN ANTIMICROBIAL PEPTIDE"/>
    <property type="match status" value="1"/>
</dbReference>
<dbReference type="Pfam" id="PF00666">
    <property type="entry name" value="Cathelicidins"/>
    <property type="match status" value="1"/>
</dbReference>
<dbReference type="SUPFAM" id="SSF54403">
    <property type="entry name" value="Cystatin/monellin"/>
    <property type="match status" value="1"/>
</dbReference>
<dbReference type="PROSITE" id="PS00946">
    <property type="entry name" value="CATHELICIDINS_1"/>
    <property type="match status" value="1"/>
</dbReference>
<dbReference type="PROSITE" id="PS00947">
    <property type="entry name" value="CATHELICIDINS_2"/>
    <property type="match status" value="1"/>
</dbReference>
<gene>
    <name type="primary">CATHL3</name>
    <name type="synonym">BAC7</name>
    <name type="synonym">BAC7.5</name>
</gene>
<evidence type="ECO:0000250" key="1"/>
<evidence type="ECO:0000250" key="2">
    <source>
        <dbReference type="UniProtKB" id="P19661"/>
    </source>
</evidence>
<evidence type="ECO:0000255" key="3"/>
<evidence type="ECO:0000256" key="4">
    <source>
        <dbReference type="SAM" id="MobiDB-lite"/>
    </source>
</evidence>
<evidence type="ECO:0000305" key="5"/>
<evidence type="ECO:0007829" key="6">
    <source>
        <dbReference type="PDB" id="4JWI"/>
    </source>
</evidence>
<comment type="function">
    <text evidence="1">Exerts, in vitro, a potent antimicrobial activity. Probably due to an impairment of the function of the respiratory chain and of energy-dependent activities in the inner membrane of susceptible microorganisms (By similarity).</text>
</comment>
<comment type="subcellular location">
    <subcellularLocation>
        <location>Secreted</location>
    </subcellularLocation>
</comment>
<comment type="similarity">
    <text evidence="5">Belongs to the cathelicidin family.</text>
</comment>
<sequence>METQMASPSLGRCSLWLLLLGLLLPSASAQALSYREAVLRAVGQLNEKSSEVNLYRLLELDPPPKDAEDQGARKPVSFRVKETVCPRMSQQPPEQCDFKENGLVKQCVGTVSLDTSNDEFDLNCNELQSVRRLRPRRPRLPRPRPRPRPRPRSLPLPRPQPRRIPRPILLPWRPPRPIPRPQPQPIPRWL</sequence>
<organism>
    <name type="scientific">Ovis aries</name>
    <name type="common">Sheep</name>
    <dbReference type="NCBI Taxonomy" id="9940"/>
    <lineage>
        <taxon>Eukaryota</taxon>
        <taxon>Metazoa</taxon>
        <taxon>Chordata</taxon>
        <taxon>Craniata</taxon>
        <taxon>Vertebrata</taxon>
        <taxon>Euteleostomi</taxon>
        <taxon>Mammalia</taxon>
        <taxon>Eutheria</taxon>
        <taxon>Laurasiatheria</taxon>
        <taxon>Artiodactyla</taxon>
        <taxon>Ruminantia</taxon>
        <taxon>Pecora</taxon>
        <taxon>Bovidae</taxon>
        <taxon>Caprinae</taxon>
        <taxon>Ovis</taxon>
    </lineage>
</organism>
<accession>P50415</accession>
<reference key="1">
    <citation type="journal article" date="1995" name="FEBS Lett.">
        <title>cDNA sequences of three sheep myeloid cathelicidins.</title>
        <authorList>
            <person name="Bagella L."/>
            <person name="Scocchi M."/>
            <person name="Zanetti M."/>
        </authorList>
    </citation>
    <scope>NUCLEOTIDE SEQUENCE [MRNA]</scope>
    <source>
        <tissue>Bone marrow</tissue>
    </source>
</reference>
<protein>
    <recommendedName>
        <fullName>Cathelicidin-3</fullName>
    </recommendedName>
    <alternativeName>
        <fullName>Bactenecin-7</fullName>
        <shortName>Bac7</shortName>
    </alternativeName>
    <alternativeName>
        <fullName>PR-59</fullName>
    </alternativeName>
</protein>
<proteinExistence type="evidence at protein level"/>